<organism>
    <name type="scientific">Shewanella baltica (strain OS185)</name>
    <dbReference type="NCBI Taxonomy" id="402882"/>
    <lineage>
        <taxon>Bacteria</taxon>
        <taxon>Pseudomonadati</taxon>
        <taxon>Pseudomonadota</taxon>
        <taxon>Gammaproteobacteria</taxon>
        <taxon>Alteromonadales</taxon>
        <taxon>Shewanellaceae</taxon>
        <taxon>Shewanella</taxon>
    </lineage>
</organism>
<proteinExistence type="inferred from homology"/>
<accession>A6WH87</accession>
<feature type="chain" id="PRO_1000048571" description="DNA replication and repair protein RecF">
    <location>
        <begin position="1"/>
        <end position="360"/>
    </location>
</feature>
<feature type="binding site" evidence="1">
    <location>
        <begin position="30"/>
        <end position="37"/>
    </location>
    <ligand>
        <name>ATP</name>
        <dbReference type="ChEBI" id="CHEBI:30616"/>
    </ligand>
</feature>
<dbReference type="EMBL" id="CP000753">
    <property type="protein sequence ID" value="ABS06176.1"/>
    <property type="molecule type" value="Genomic_DNA"/>
</dbReference>
<dbReference type="RefSeq" id="WP_011981985.1">
    <property type="nucleotide sequence ID" value="NC_009665.1"/>
</dbReference>
<dbReference type="SMR" id="A6WH87"/>
<dbReference type="KEGG" id="sbm:Shew185_0003"/>
<dbReference type="HOGENOM" id="CLU_040267_0_0_6"/>
<dbReference type="GO" id="GO:0005737">
    <property type="term" value="C:cytoplasm"/>
    <property type="evidence" value="ECO:0007669"/>
    <property type="project" value="UniProtKB-SubCell"/>
</dbReference>
<dbReference type="GO" id="GO:0005524">
    <property type="term" value="F:ATP binding"/>
    <property type="evidence" value="ECO:0007669"/>
    <property type="project" value="UniProtKB-UniRule"/>
</dbReference>
<dbReference type="GO" id="GO:0003697">
    <property type="term" value="F:single-stranded DNA binding"/>
    <property type="evidence" value="ECO:0007669"/>
    <property type="project" value="UniProtKB-UniRule"/>
</dbReference>
<dbReference type="GO" id="GO:0006260">
    <property type="term" value="P:DNA replication"/>
    <property type="evidence" value="ECO:0007669"/>
    <property type="project" value="UniProtKB-UniRule"/>
</dbReference>
<dbReference type="GO" id="GO:0000731">
    <property type="term" value="P:DNA synthesis involved in DNA repair"/>
    <property type="evidence" value="ECO:0007669"/>
    <property type="project" value="TreeGrafter"/>
</dbReference>
<dbReference type="GO" id="GO:0006302">
    <property type="term" value="P:double-strand break repair"/>
    <property type="evidence" value="ECO:0007669"/>
    <property type="project" value="TreeGrafter"/>
</dbReference>
<dbReference type="GO" id="GO:0009432">
    <property type="term" value="P:SOS response"/>
    <property type="evidence" value="ECO:0007669"/>
    <property type="project" value="UniProtKB-UniRule"/>
</dbReference>
<dbReference type="Gene3D" id="3.40.50.300">
    <property type="entry name" value="P-loop containing nucleotide triphosphate hydrolases"/>
    <property type="match status" value="1"/>
</dbReference>
<dbReference type="Gene3D" id="1.20.1050.90">
    <property type="entry name" value="RecF/RecN/SMC, N-terminal domain"/>
    <property type="match status" value="1"/>
</dbReference>
<dbReference type="HAMAP" id="MF_00365">
    <property type="entry name" value="RecF"/>
    <property type="match status" value="1"/>
</dbReference>
<dbReference type="InterPro" id="IPR001238">
    <property type="entry name" value="DNA-binding_RecF"/>
</dbReference>
<dbReference type="InterPro" id="IPR018078">
    <property type="entry name" value="DNA-binding_RecF_CS"/>
</dbReference>
<dbReference type="InterPro" id="IPR027417">
    <property type="entry name" value="P-loop_NTPase"/>
</dbReference>
<dbReference type="InterPro" id="IPR003395">
    <property type="entry name" value="RecF/RecN/SMC_N"/>
</dbReference>
<dbReference type="InterPro" id="IPR042174">
    <property type="entry name" value="RecF_2"/>
</dbReference>
<dbReference type="NCBIfam" id="TIGR00611">
    <property type="entry name" value="recf"/>
    <property type="match status" value="1"/>
</dbReference>
<dbReference type="PANTHER" id="PTHR32182">
    <property type="entry name" value="DNA REPLICATION AND REPAIR PROTEIN RECF"/>
    <property type="match status" value="1"/>
</dbReference>
<dbReference type="PANTHER" id="PTHR32182:SF0">
    <property type="entry name" value="DNA REPLICATION AND REPAIR PROTEIN RECF"/>
    <property type="match status" value="1"/>
</dbReference>
<dbReference type="Pfam" id="PF02463">
    <property type="entry name" value="SMC_N"/>
    <property type="match status" value="1"/>
</dbReference>
<dbReference type="SUPFAM" id="SSF52540">
    <property type="entry name" value="P-loop containing nucleoside triphosphate hydrolases"/>
    <property type="match status" value="1"/>
</dbReference>
<dbReference type="PROSITE" id="PS00617">
    <property type="entry name" value="RECF_1"/>
    <property type="match status" value="1"/>
</dbReference>
<dbReference type="PROSITE" id="PS00618">
    <property type="entry name" value="RECF_2"/>
    <property type="match status" value="1"/>
</dbReference>
<sequence>MSLTRLNIEAFRNIQSAQLIPAPGINLIYGQNGSGKTSILEAIYFLGMGRSFRSHLSQRVINNDDDKLTLFATLNLARGDSKIGLRRFRSGETEVRIDGEKVKRLSTLAETLPIQVITPESFSLLFEGPKSRRQFIDWGAFHADPLFYGAWTNVRRVLKQRNQLLRNGSSYSNIQFWDQEFVRYAEQVTEIRNHYVDSLNELLKGIIGEFLPSVDVKVSFTRGWDSKTDFAELLENQYSRDLATGHTVSGPHKADLRLRVGTLPAQDALSRGQLKLLVCALRIAQGKLLKQQIDKHSIYLVDDLPSELDAQHRQLLLKQLTDTGAQVFVTAIDPAAIVDSLHTPPSRMFHVEQGRVTVIE</sequence>
<reference key="1">
    <citation type="submission" date="2007-07" db="EMBL/GenBank/DDBJ databases">
        <title>Complete sequence of chromosome of Shewanella baltica OS185.</title>
        <authorList>
            <consortium name="US DOE Joint Genome Institute"/>
            <person name="Copeland A."/>
            <person name="Lucas S."/>
            <person name="Lapidus A."/>
            <person name="Barry K."/>
            <person name="Glavina del Rio T."/>
            <person name="Dalin E."/>
            <person name="Tice H."/>
            <person name="Pitluck S."/>
            <person name="Sims D."/>
            <person name="Brettin T."/>
            <person name="Bruce D."/>
            <person name="Detter J.C."/>
            <person name="Han C."/>
            <person name="Schmutz J."/>
            <person name="Larimer F."/>
            <person name="Land M."/>
            <person name="Hauser L."/>
            <person name="Kyrpides N."/>
            <person name="Mikhailova N."/>
            <person name="Brettar I."/>
            <person name="Rodrigues J."/>
            <person name="Konstantinidis K."/>
            <person name="Tiedje J."/>
            <person name="Richardson P."/>
        </authorList>
    </citation>
    <scope>NUCLEOTIDE SEQUENCE [LARGE SCALE GENOMIC DNA]</scope>
    <source>
        <strain>OS185</strain>
    </source>
</reference>
<protein>
    <recommendedName>
        <fullName evidence="1">DNA replication and repair protein RecF</fullName>
    </recommendedName>
</protein>
<evidence type="ECO:0000255" key="1">
    <source>
        <dbReference type="HAMAP-Rule" id="MF_00365"/>
    </source>
</evidence>
<comment type="function">
    <text evidence="1">The RecF protein is involved in DNA metabolism; it is required for DNA replication and normal SOS inducibility. RecF binds preferentially to single-stranded, linear DNA. It also seems to bind ATP.</text>
</comment>
<comment type="subcellular location">
    <subcellularLocation>
        <location evidence="1">Cytoplasm</location>
    </subcellularLocation>
</comment>
<comment type="similarity">
    <text evidence="1">Belongs to the RecF family.</text>
</comment>
<gene>
    <name evidence="1" type="primary">recF</name>
    <name type="ordered locus">Shew185_0003</name>
</gene>
<keyword id="KW-0067">ATP-binding</keyword>
<keyword id="KW-0963">Cytoplasm</keyword>
<keyword id="KW-0227">DNA damage</keyword>
<keyword id="KW-0234">DNA repair</keyword>
<keyword id="KW-0235">DNA replication</keyword>
<keyword id="KW-0238">DNA-binding</keyword>
<keyword id="KW-0547">Nucleotide-binding</keyword>
<keyword id="KW-0742">SOS response</keyword>
<name>RECF_SHEB8</name>